<evidence type="ECO:0000255" key="1">
    <source>
        <dbReference type="HAMAP-Rule" id="MF_01615"/>
    </source>
</evidence>
<gene>
    <name evidence="1" type="primary">pdxT</name>
    <name type="ordered locus">SAHV_0517</name>
</gene>
<feature type="chain" id="PRO_1000069469" description="Pyridoxal 5'-phosphate synthase subunit PdxT">
    <location>
        <begin position="1"/>
        <end position="186"/>
    </location>
</feature>
<feature type="active site" description="Nucleophile" evidence="1">
    <location>
        <position position="75"/>
    </location>
</feature>
<feature type="active site" description="Charge relay system" evidence="1">
    <location>
        <position position="165"/>
    </location>
</feature>
<feature type="active site" description="Charge relay system" evidence="1">
    <location>
        <position position="167"/>
    </location>
</feature>
<feature type="binding site" evidence="1">
    <location>
        <begin position="46"/>
        <end position="48"/>
    </location>
    <ligand>
        <name>L-glutamine</name>
        <dbReference type="ChEBI" id="CHEBI:58359"/>
    </ligand>
</feature>
<feature type="binding site" evidence="1">
    <location>
        <position position="101"/>
    </location>
    <ligand>
        <name>L-glutamine</name>
        <dbReference type="ChEBI" id="CHEBI:58359"/>
    </ligand>
</feature>
<feature type="binding site" evidence="1">
    <location>
        <begin position="129"/>
        <end position="130"/>
    </location>
    <ligand>
        <name>L-glutamine</name>
        <dbReference type="ChEBI" id="CHEBI:58359"/>
    </ligand>
</feature>
<keyword id="KW-0002">3D-structure</keyword>
<keyword id="KW-0315">Glutamine amidotransferase</keyword>
<keyword id="KW-0378">Hydrolase</keyword>
<keyword id="KW-0456">Lyase</keyword>
<keyword id="KW-0663">Pyridoxal phosphate</keyword>
<comment type="function">
    <text evidence="1">Catalyzes the hydrolysis of glutamine to glutamate and ammonia as part of the biosynthesis of pyridoxal 5'-phosphate. The resulting ammonia molecule is channeled to the active site of PdxS.</text>
</comment>
<comment type="catalytic activity">
    <reaction evidence="1">
        <text>aldehydo-D-ribose 5-phosphate + D-glyceraldehyde 3-phosphate + L-glutamine = pyridoxal 5'-phosphate + L-glutamate + phosphate + 3 H2O + H(+)</text>
        <dbReference type="Rhea" id="RHEA:31507"/>
        <dbReference type="ChEBI" id="CHEBI:15377"/>
        <dbReference type="ChEBI" id="CHEBI:15378"/>
        <dbReference type="ChEBI" id="CHEBI:29985"/>
        <dbReference type="ChEBI" id="CHEBI:43474"/>
        <dbReference type="ChEBI" id="CHEBI:58273"/>
        <dbReference type="ChEBI" id="CHEBI:58359"/>
        <dbReference type="ChEBI" id="CHEBI:59776"/>
        <dbReference type="ChEBI" id="CHEBI:597326"/>
        <dbReference type="EC" id="4.3.3.6"/>
    </reaction>
</comment>
<comment type="catalytic activity">
    <reaction evidence="1">
        <text>L-glutamine + H2O = L-glutamate + NH4(+)</text>
        <dbReference type="Rhea" id="RHEA:15889"/>
        <dbReference type="ChEBI" id="CHEBI:15377"/>
        <dbReference type="ChEBI" id="CHEBI:28938"/>
        <dbReference type="ChEBI" id="CHEBI:29985"/>
        <dbReference type="ChEBI" id="CHEBI:58359"/>
        <dbReference type="EC" id="3.5.1.2"/>
    </reaction>
</comment>
<comment type="pathway">
    <text evidence="1">Cofactor biosynthesis; pyridoxal 5'-phosphate biosynthesis.</text>
</comment>
<comment type="subunit">
    <text evidence="1">In the presence of PdxS, forms a dodecamer of heterodimers. Only shows activity in the heterodimer.</text>
</comment>
<comment type="similarity">
    <text evidence="1">Belongs to the glutaminase PdxT/SNO family.</text>
</comment>
<reference key="1">
    <citation type="journal article" date="2008" name="Antimicrob. Agents Chemother.">
        <title>Mutated response regulator graR is responsible for phenotypic conversion of Staphylococcus aureus from heterogeneous vancomycin-intermediate resistance to vancomycin-intermediate resistance.</title>
        <authorList>
            <person name="Neoh H.-M."/>
            <person name="Cui L."/>
            <person name="Yuzawa H."/>
            <person name="Takeuchi F."/>
            <person name="Matsuo M."/>
            <person name="Hiramatsu K."/>
        </authorList>
    </citation>
    <scope>NUCLEOTIDE SEQUENCE [LARGE SCALE GENOMIC DNA]</scope>
    <source>
        <strain>Mu3 / ATCC 700698</strain>
    </source>
</reference>
<protein>
    <recommendedName>
        <fullName evidence="1">Pyridoxal 5'-phosphate synthase subunit PdxT</fullName>
        <ecNumber evidence="1">4.3.3.6</ecNumber>
    </recommendedName>
    <alternativeName>
        <fullName evidence="1">Pdx2</fullName>
    </alternativeName>
    <alternativeName>
        <fullName evidence="1">Pyridoxal 5'-phosphate synthase glutaminase subunit</fullName>
        <ecNumber evidence="1">3.5.1.2</ecNumber>
    </alternativeName>
</protein>
<name>PDXT_STAA1</name>
<dbReference type="EC" id="4.3.3.6" evidence="1"/>
<dbReference type="EC" id="3.5.1.2" evidence="1"/>
<dbReference type="EMBL" id="AP009324">
    <property type="protein sequence ID" value="BAF77400.1"/>
    <property type="molecule type" value="Genomic_DNA"/>
</dbReference>
<dbReference type="RefSeq" id="WP_000690439.1">
    <property type="nucleotide sequence ID" value="NZ_CTYB01000013.1"/>
</dbReference>
<dbReference type="PDB" id="8U7J">
    <property type="method" value="X-ray"/>
    <property type="resolution" value="3.02 A"/>
    <property type="chains" value="M/N/O/P/Q/R/S/T/U/V/W/X=1-186"/>
</dbReference>
<dbReference type="PDBsum" id="8U7J"/>
<dbReference type="SMR" id="A7WYT2"/>
<dbReference type="MEROPS" id="C26.A32"/>
<dbReference type="KEGG" id="saw:SAHV_0517"/>
<dbReference type="HOGENOM" id="CLU_069674_2_0_9"/>
<dbReference type="UniPathway" id="UPA00245"/>
<dbReference type="GO" id="GO:0005829">
    <property type="term" value="C:cytosol"/>
    <property type="evidence" value="ECO:0007669"/>
    <property type="project" value="TreeGrafter"/>
</dbReference>
<dbReference type="GO" id="GO:1903600">
    <property type="term" value="C:glutaminase complex"/>
    <property type="evidence" value="ECO:0007669"/>
    <property type="project" value="TreeGrafter"/>
</dbReference>
<dbReference type="GO" id="GO:0004359">
    <property type="term" value="F:glutaminase activity"/>
    <property type="evidence" value="ECO:0007669"/>
    <property type="project" value="UniProtKB-UniRule"/>
</dbReference>
<dbReference type="GO" id="GO:0036381">
    <property type="term" value="F:pyridoxal 5'-phosphate synthase (glutamine hydrolysing) activity"/>
    <property type="evidence" value="ECO:0007669"/>
    <property type="project" value="UniProtKB-UniRule"/>
</dbReference>
<dbReference type="GO" id="GO:0006543">
    <property type="term" value="P:glutamine catabolic process"/>
    <property type="evidence" value="ECO:0007669"/>
    <property type="project" value="UniProtKB-UniRule"/>
</dbReference>
<dbReference type="GO" id="GO:0042823">
    <property type="term" value="P:pyridoxal phosphate biosynthetic process"/>
    <property type="evidence" value="ECO:0007669"/>
    <property type="project" value="UniProtKB-UniRule"/>
</dbReference>
<dbReference type="GO" id="GO:0008614">
    <property type="term" value="P:pyridoxine metabolic process"/>
    <property type="evidence" value="ECO:0007669"/>
    <property type="project" value="TreeGrafter"/>
</dbReference>
<dbReference type="CDD" id="cd01749">
    <property type="entry name" value="GATase1_PB"/>
    <property type="match status" value="1"/>
</dbReference>
<dbReference type="FunFam" id="3.40.50.880:FF:000010">
    <property type="entry name" value="uncharacterized protein LOC100176842 isoform X2"/>
    <property type="match status" value="1"/>
</dbReference>
<dbReference type="Gene3D" id="3.40.50.880">
    <property type="match status" value="1"/>
</dbReference>
<dbReference type="HAMAP" id="MF_01615">
    <property type="entry name" value="PdxT"/>
    <property type="match status" value="1"/>
</dbReference>
<dbReference type="InterPro" id="IPR029062">
    <property type="entry name" value="Class_I_gatase-like"/>
</dbReference>
<dbReference type="InterPro" id="IPR002161">
    <property type="entry name" value="PdxT/SNO"/>
</dbReference>
<dbReference type="InterPro" id="IPR021196">
    <property type="entry name" value="PdxT/SNO_CS"/>
</dbReference>
<dbReference type="NCBIfam" id="TIGR03800">
    <property type="entry name" value="PLP_synth_Pdx2"/>
    <property type="match status" value="1"/>
</dbReference>
<dbReference type="PANTHER" id="PTHR31559">
    <property type="entry name" value="PYRIDOXAL 5'-PHOSPHATE SYNTHASE SUBUNIT SNO"/>
    <property type="match status" value="1"/>
</dbReference>
<dbReference type="PANTHER" id="PTHR31559:SF0">
    <property type="entry name" value="PYRIDOXAL 5'-PHOSPHATE SYNTHASE SUBUNIT SNO1-RELATED"/>
    <property type="match status" value="1"/>
</dbReference>
<dbReference type="Pfam" id="PF01174">
    <property type="entry name" value="SNO"/>
    <property type="match status" value="1"/>
</dbReference>
<dbReference type="PIRSF" id="PIRSF005639">
    <property type="entry name" value="Glut_amidoT_SNO"/>
    <property type="match status" value="1"/>
</dbReference>
<dbReference type="SUPFAM" id="SSF52317">
    <property type="entry name" value="Class I glutamine amidotransferase-like"/>
    <property type="match status" value="1"/>
</dbReference>
<dbReference type="PROSITE" id="PS01236">
    <property type="entry name" value="PDXT_SNO_1"/>
    <property type="match status" value="1"/>
</dbReference>
<dbReference type="PROSITE" id="PS51130">
    <property type="entry name" value="PDXT_SNO_2"/>
    <property type="match status" value="1"/>
</dbReference>
<sequence>MKIGVLALQGAVREHIRHIELSGHEGIAVKKVEQLEEIEGLILPGGESTTLRRLMNLYGFKEALQNSTLPMFGTCAGLIVLAQDIVGEEGYLNKLNITVQRNSFGRQVDSFETELDIKGIATDIEGVFIRAPHIEKVGQGVDILCKVNEKIVAVQQGKYLGVSFHPELTDDYRVTDYFINHIVKKA</sequence>
<organism>
    <name type="scientific">Staphylococcus aureus (strain Mu3 / ATCC 700698)</name>
    <dbReference type="NCBI Taxonomy" id="418127"/>
    <lineage>
        <taxon>Bacteria</taxon>
        <taxon>Bacillati</taxon>
        <taxon>Bacillota</taxon>
        <taxon>Bacilli</taxon>
        <taxon>Bacillales</taxon>
        <taxon>Staphylococcaceae</taxon>
        <taxon>Staphylococcus</taxon>
    </lineage>
</organism>
<accession>A7WYT2</accession>
<proteinExistence type="evidence at protein level"/>